<dbReference type="EMBL" id="X62936">
    <property type="protein sequence ID" value="CAA44711.1"/>
    <property type="molecule type" value="Genomic_DNA"/>
</dbReference>
<dbReference type="PIR" id="S18662">
    <property type="entry name" value="S18662"/>
</dbReference>
<dbReference type="SMR" id="P29231"/>
<organism>
    <name type="scientific">Mesomycoplasma hyorhinis</name>
    <name type="common">Mycoplasma hyorhinis</name>
    <dbReference type="NCBI Taxonomy" id="2100"/>
    <lineage>
        <taxon>Bacteria</taxon>
        <taxon>Bacillati</taxon>
        <taxon>Mycoplasmatota</taxon>
        <taxon>Mycoplasmoidales</taxon>
        <taxon>Metamycoplasmataceae</taxon>
        <taxon>Mesomycoplasma</taxon>
    </lineage>
</organism>
<protein>
    <recommendedName>
        <fullName>Uncharacterized protein in vlpC 3'region</fullName>
    </recommendedName>
</protein>
<name>YVLP_MESHY</name>
<feature type="chain" id="PRO_0000066546" description="Uncharacterized protein in vlpC 3'region">
    <location>
        <begin position="1"/>
        <end position="62" status="greater than"/>
    </location>
</feature>
<feature type="non-terminal residue">
    <location>
        <position position="62"/>
    </location>
</feature>
<accession>P29231</accession>
<reference key="1">
    <citation type="journal article" date="1991" name="EMBO J.">
        <title>Molecular basis of Mycoplasma surface antigenic variation: a novel set of divergent genes undergo spontaneous mutation of periodic coding regions and 5' regulatory sequences.</title>
        <authorList>
            <person name="Yogev D."/>
            <person name="Rosengarten R."/>
            <person name="Watson-Mckown R."/>
            <person name="Wise K.S."/>
        </authorList>
    </citation>
    <scope>NUCLEOTIDE SEQUENCE [GENOMIC DNA]</scope>
    <source>
        <strain>SK76</strain>
    </source>
</reference>
<proteinExistence type="predicted"/>
<sequence>MATATAKVIYDSGFKNIWIYGIDNEELEQLSQGKNLKYFPSSTQIPHFNTSNNLEQILNNVA</sequence>